<reference key="1">
    <citation type="journal article" date="2007" name="Microbiology">
        <title>Comparative analysis of the Corynebacterium glutamicum group and complete genome sequence of strain R.</title>
        <authorList>
            <person name="Yukawa H."/>
            <person name="Omumasaba C.A."/>
            <person name="Nonaka H."/>
            <person name="Kos P."/>
            <person name="Okai N."/>
            <person name="Suzuki N."/>
            <person name="Suda M."/>
            <person name="Tsuge Y."/>
            <person name="Watanabe J."/>
            <person name="Ikeda Y."/>
            <person name="Vertes A.A."/>
            <person name="Inui M."/>
        </authorList>
    </citation>
    <scope>NUCLEOTIDE SEQUENCE [LARGE SCALE GENOMIC DNA]</scope>
    <source>
        <strain>R</strain>
    </source>
</reference>
<feature type="chain" id="PRO_1000013736" description="tRNA uridine(34) hydroxylase">
    <location>
        <begin position="1"/>
        <end position="312"/>
    </location>
</feature>
<feature type="domain" description="Rhodanese" evidence="1">
    <location>
        <begin position="130"/>
        <end position="225"/>
    </location>
</feature>
<feature type="active site" description="Cysteine persulfide intermediate" evidence="1">
    <location>
        <position position="185"/>
    </location>
</feature>
<protein>
    <recommendedName>
        <fullName evidence="1">tRNA uridine(34) hydroxylase</fullName>
        <ecNumber evidence="1">1.14.-.-</ecNumber>
    </recommendedName>
    <alternativeName>
        <fullName evidence="1">tRNA hydroxylation protein O</fullName>
    </alternativeName>
</protein>
<comment type="function">
    <text evidence="1">Catalyzes oxygen-dependent 5-hydroxyuridine (ho5U) modification at position 34 in tRNAs.</text>
</comment>
<comment type="catalytic activity">
    <reaction evidence="1">
        <text>uridine(34) in tRNA + AH2 + O2 = 5-hydroxyuridine(34) in tRNA + A + H2O</text>
        <dbReference type="Rhea" id="RHEA:64224"/>
        <dbReference type="Rhea" id="RHEA-COMP:11727"/>
        <dbReference type="Rhea" id="RHEA-COMP:13381"/>
        <dbReference type="ChEBI" id="CHEBI:13193"/>
        <dbReference type="ChEBI" id="CHEBI:15377"/>
        <dbReference type="ChEBI" id="CHEBI:15379"/>
        <dbReference type="ChEBI" id="CHEBI:17499"/>
        <dbReference type="ChEBI" id="CHEBI:65315"/>
        <dbReference type="ChEBI" id="CHEBI:136877"/>
    </reaction>
</comment>
<comment type="similarity">
    <text evidence="1">Belongs to the TrhO family.</text>
</comment>
<name>TRHO_CORGB</name>
<keyword id="KW-0560">Oxidoreductase</keyword>
<keyword id="KW-0819">tRNA processing</keyword>
<gene>
    <name evidence="1" type="primary">trhO</name>
    <name type="ordered locus">cgR_2881</name>
</gene>
<organism>
    <name type="scientific">Corynebacterium glutamicum (strain R)</name>
    <dbReference type="NCBI Taxonomy" id="340322"/>
    <lineage>
        <taxon>Bacteria</taxon>
        <taxon>Bacillati</taxon>
        <taxon>Actinomycetota</taxon>
        <taxon>Actinomycetes</taxon>
        <taxon>Mycobacteriales</taxon>
        <taxon>Corynebacteriaceae</taxon>
        <taxon>Corynebacterium</taxon>
    </lineage>
</organism>
<evidence type="ECO:0000255" key="1">
    <source>
        <dbReference type="HAMAP-Rule" id="MF_00469"/>
    </source>
</evidence>
<dbReference type="EC" id="1.14.-.-" evidence="1"/>
<dbReference type="EMBL" id="AP009044">
    <property type="protein sequence ID" value="BAF55901.1"/>
    <property type="molecule type" value="Genomic_DNA"/>
</dbReference>
<dbReference type="RefSeq" id="WP_003855092.1">
    <property type="nucleotide sequence ID" value="NC_009342.1"/>
</dbReference>
<dbReference type="SMR" id="A4QI35"/>
<dbReference type="KEGG" id="cgt:cgR_2881"/>
<dbReference type="HOGENOM" id="CLU_038878_1_0_11"/>
<dbReference type="PhylomeDB" id="A4QI35"/>
<dbReference type="Proteomes" id="UP000006698">
    <property type="component" value="Chromosome"/>
</dbReference>
<dbReference type="GO" id="GO:0016705">
    <property type="term" value="F:oxidoreductase activity, acting on paired donors, with incorporation or reduction of molecular oxygen"/>
    <property type="evidence" value="ECO:0007669"/>
    <property type="project" value="UniProtKB-UniRule"/>
</dbReference>
<dbReference type="GO" id="GO:0006400">
    <property type="term" value="P:tRNA modification"/>
    <property type="evidence" value="ECO:0007669"/>
    <property type="project" value="UniProtKB-UniRule"/>
</dbReference>
<dbReference type="CDD" id="cd01518">
    <property type="entry name" value="RHOD_YceA"/>
    <property type="match status" value="1"/>
</dbReference>
<dbReference type="Gene3D" id="3.30.70.100">
    <property type="match status" value="1"/>
</dbReference>
<dbReference type="Gene3D" id="3.40.250.10">
    <property type="entry name" value="Rhodanese-like domain"/>
    <property type="match status" value="1"/>
</dbReference>
<dbReference type="HAMAP" id="MF_00469">
    <property type="entry name" value="TrhO"/>
    <property type="match status" value="1"/>
</dbReference>
<dbReference type="InterPro" id="IPR001763">
    <property type="entry name" value="Rhodanese-like_dom"/>
</dbReference>
<dbReference type="InterPro" id="IPR036873">
    <property type="entry name" value="Rhodanese-like_dom_sf"/>
</dbReference>
<dbReference type="InterPro" id="IPR022111">
    <property type="entry name" value="Rhodanese_C"/>
</dbReference>
<dbReference type="InterPro" id="IPR020936">
    <property type="entry name" value="TrhO"/>
</dbReference>
<dbReference type="InterPro" id="IPR040503">
    <property type="entry name" value="TRHO_N"/>
</dbReference>
<dbReference type="NCBIfam" id="NF001134">
    <property type="entry name" value="PRK00142.1-2"/>
    <property type="match status" value="1"/>
</dbReference>
<dbReference type="PANTHER" id="PTHR43268">
    <property type="entry name" value="THIOSULFATE SULFURTRANSFERASE/RHODANESE-LIKE DOMAIN-CONTAINING PROTEIN 2"/>
    <property type="match status" value="1"/>
</dbReference>
<dbReference type="PANTHER" id="PTHR43268:SF6">
    <property type="entry name" value="THIOSULFATE SULFURTRANSFERASE_RHODANESE-LIKE DOMAIN-CONTAINING PROTEIN 2"/>
    <property type="match status" value="1"/>
</dbReference>
<dbReference type="Pfam" id="PF00581">
    <property type="entry name" value="Rhodanese"/>
    <property type="match status" value="1"/>
</dbReference>
<dbReference type="Pfam" id="PF12368">
    <property type="entry name" value="Rhodanese_C"/>
    <property type="match status" value="1"/>
</dbReference>
<dbReference type="Pfam" id="PF17773">
    <property type="entry name" value="UPF0176_N"/>
    <property type="match status" value="1"/>
</dbReference>
<dbReference type="SMART" id="SM00450">
    <property type="entry name" value="RHOD"/>
    <property type="match status" value="1"/>
</dbReference>
<dbReference type="SUPFAM" id="SSF52821">
    <property type="entry name" value="Rhodanese/Cell cycle control phosphatase"/>
    <property type="match status" value="1"/>
</dbReference>
<dbReference type="PROSITE" id="PS50206">
    <property type="entry name" value="RHODANESE_3"/>
    <property type="match status" value="1"/>
</dbReference>
<accession>A4QI35</accession>
<sequence length="312" mass="35060">MATSKILLYYAFTPLSDPKAVQLWQRELCESLNLRGRILISTHGINGTVGGDIDDCKAYIKKTREYPGFNRMQFKWSEGGADDFPKLSVKVRDEIVAFGAPDELKVDENGVVGGGVHLKPQQVNELVEARGDEVVFFDGRNAMEAQIGKFKDAVVPDVETTHDFIAEIESGKYDDLKDKPVVTYCTGGIRCEILSSLMINRGFKEVYQIDGGIVRYGEQFGNKGLWEGSLYVFDKRMHMEFGEDYKEVGHCIHCDTPTNKFEHCLNEDDCRELVLMCPDCFANVETRHCKRERCAAIAADFAEQGIDPLVTS</sequence>
<proteinExistence type="inferred from homology"/>